<sequence length="230" mass="25176">MSKAVVVFSGGQDSTTCLVQALSQFDEVHAITFDYGQRHSEEIEVAKALTSELGCASHKIMDVSLLGELAISALTRDAIPVSHELMDNGLPNTFVPGRNILFLTLAGIYAYQLGADTVITGVCETDFSGYPDCRNDFIKAMEQALNLGMDKQLNIHTPLMWLNKAETWALADRYGKLELVRNHTLTCYNGIRGDGCGDCPACHLRKRGLEDYLSNRDAVNAELTKKTGAN</sequence>
<feature type="chain" id="PRO_1000069799" description="7-cyano-7-deazaguanine synthase">
    <location>
        <begin position="1"/>
        <end position="230"/>
    </location>
</feature>
<feature type="binding site" evidence="1">
    <location>
        <begin position="8"/>
        <end position="18"/>
    </location>
    <ligand>
        <name>ATP</name>
        <dbReference type="ChEBI" id="CHEBI:30616"/>
    </ligand>
</feature>
<feature type="binding site" evidence="1">
    <location>
        <position position="187"/>
    </location>
    <ligand>
        <name>Zn(2+)</name>
        <dbReference type="ChEBI" id="CHEBI:29105"/>
    </ligand>
</feature>
<feature type="binding site" evidence="1">
    <location>
        <position position="196"/>
    </location>
    <ligand>
        <name>Zn(2+)</name>
        <dbReference type="ChEBI" id="CHEBI:29105"/>
    </ligand>
</feature>
<feature type="binding site" evidence="1">
    <location>
        <position position="199"/>
    </location>
    <ligand>
        <name>Zn(2+)</name>
        <dbReference type="ChEBI" id="CHEBI:29105"/>
    </ligand>
</feature>
<feature type="binding site" evidence="1">
    <location>
        <position position="202"/>
    </location>
    <ligand>
        <name>Zn(2+)</name>
        <dbReference type="ChEBI" id="CHEBI:29105"/>
    </ligand>
</feature>
<accession>A1S6M5</accession>
<proteinExistence type="inferred from homology"/>
<dbReference type="EC" id="6.3.4.20" evidence="1"/>
<dbReference type="EMBL" id="CP000507">
    <property type="protein sequence ID" value="ABM00032.1"/>
    <property type="molecule type" value="Genomic_DNA"/>
</dbReference>
<dbReference type="RefSeq" id="WP_011759939.1">
    <property type="nucleotide sequence ID" value="NC_008700.1"/>
</dbReference>
<dbReference type="SMR" id="A1S6M5"/>
<dbReference type="STRING" id="326297.Sama_1826"/>
<dbReference type="KEGG" id="saz:Sama_1826"/>
<dbReference type="eggNOG" id="COG0603">
    <property type="taxonomic scope" value="Bacteria"/>
</dbReference>
<dbReference type="HOGENOM" id="CLU_081854_0_0_6"/>
<dbReference type="UniPathway" id="UPA00391"/>
<dbReference type="Proteomes" id="UP000009175">
    <property type="component" value="Chromosome"/>
</dbReference>
<dbReference type="GO" id="GO:0005524">
    <property type="term" value="F:ATP binding"/>
    <property type="evidence" value="ECO:0007669"/>
    <property type="project" value="UniProtKB-UniRule"/>
</dbReference>
<dbReference type="GO" id="GO:0016879">
    <property type="term" value="F:ligase activity, forming carbon-nitrogen bonds"/>
    <property type="evidence" value="ECO:0007669"/>
    <property type="project" value="UniProtKB-UniRule"/>
</dbReference>
<dbReference type="GO" id="GO:0008270">
    <property type="term" value="F:zinc ion binding"/>
    <property type="evidence" value="ECO:0007669"/>
    <property type="project" value="UniProtKB-UniRule"/>
</dbReference>
<dbReference type="GO" id="GO:0008616">
    <property type="term" value="P:queuosine biosynthetic process"/>
    <property type="evidence" value="ECO:0007669"/>
    <property type="project" value="UniProtKB-UniRule"/>
</dbReference>
<dbReference type="CDD" id="cd01995">
    <property type="entry name" value="QueC-like"/>
    <property type="match status" value="1"/>
</dbReference>
<dbReference type="FunFam" id="3.40.50.620:FF:000017">
    <property type="entry name" value="7-cyano-7-deazaguanine synthase"/>
    <property type="match status" value="1"/>
</dbReference>
<dbReference type="Gene3D" id="3.40.50.620">
    <property type="entry name" value="HUPs"/>
    <property type="match status" value="1"/>
</dbReference>
<dbReference type="HAMAP" id="MF_01633">
    <property type="entry name" value="QueC"/>
    <property type="match status" value="1"/>
</dbReference>
<dbReference type="InterPro" id="IPR018317">
    <property type="entry name" value="QueC"/>
</dbReference>
<dbReference type="InterPro" id="IPR014729">
    <property type="entry name" value="Rossmann-like_a/b/a_fold"/>
</dbReference>
<dbReference type="NCBIfam" id="TIGR00364">
    <property type="entry name" value="7-cyano-7-deazaguanine synthase QueC"/>
    <property type="match status" value="1"/>
</dbReference>
<dbReference type="NCBIfam" id="NF008317">
    <property type="entry name" value="PRK11106.1"/>
    <property type="match status" value="1"/>
</dbReference>
<dbReference type="PANTHER" id="PTHR42914">
    <property type="entry name" value="7-CYANO-7-DEAZAGUANINE SYNTHASE"/>
    <property type="match status" value="1"/>
</dbReference>
<dbReference type="PANTHER" id="PTHR42914:SF1">
    <property type="entry name" value="7-CYANO-7-DEAZAGUANINE SYNTHASE"/>
    <property type="match status" value="1"/>
</dbReference>
<dbReference type="Pfam" id="PF06508">
    <property type="entry name" value="QueC"/>
    <property type="match status" value="1"/>
</dbReference>
<dbReference type="PIRSF" id="PIRSF006293">
    <property type="entry name" value="ExsB"/>
    <property type="match status" value="1"/>
</dbReference>
<dbReference type="SUPFAM" id="SSF52402">
    <property type="entry name" value="Adenine nucleotide alpha hydrolases-like"/>
    <property type="match status" value="1"/>
</dbReference>
<comment type="function">
    <text evidence="1">Catalyzes the ATP-dependent conversion of 7-carboxy-7-deazaguanine (CDG) to 7-cyano-7-deazaguanine (preQ(0)).</text>
</comment>
<comment type="catalytic activity">
    <reaction evidence="1">
        <text>7-carboxy-7-deazaguanine + NH4(+) + ATP = 7-cyano-7-deazaguanine + ADP + phosphate + H2O + H(+)</text>
        <dbReference type="Rhea" id="RHEA:27982"/>
        <dbReference type="ChEBI" id="CHEBI:15377"/>
        <dbReference type="ChEBI" id="CHEBI:15378"/>
        <dbReference type="ChEBI" id="CHEBI:28938"/>
        <dbReference type="ChEBI" id="CHEBI:30616"/>
        <dbReference type="ChEBI" id="CHEBI:43474"/>
        <dbReference type="ChEBI" id="CHEBI:45075"/>
        <dbReference type="ChEBI" id="CHEBI:61036"/>
        <dbReference type="ChEBI" id="CHEBI:456216"/>
        <dbReference type="EC" id="6.3.4.20"/>
    </reaction>
</comment>
<comment type="cofactor">
    <cofactor evidence="1">
        <name>Zn(2+)</name>
        <dbReference type="ChEBI" id="CHEBI:29105"/>
    </cofactor>
    <text evidence="1">Binds 1 zinc ion per subunit.</text>
</comment>
<comment type="pathway">
    <text evidence="1">Purine metabolism; 7-cyano-7-deazaguanine biosynthesis.</text>
</comment>
<comment type="similarity">
    <text evidence="1">Belongs to the QueC family.</text>
</comment>
<name>QUEC_SHEAM</name>
<keyword id="KW-0067">ATP-binding</keyword>
<keyword id="KW-0436">Ligase</keyword>
<keyword id="KW-0479">Metal-binding</keyword>
<keyword id="KW-0547">Nucleotide-binding</keyword>
<keyword id="KW-0671">Queuosine biosynthesis</keyword>
<keyword id="KW-1185">Reference proteome</keyword>
<keyword id="KW-0862">Zinc</keyword>
<reference key="1">
    <citation type="submission" date="2006-12" db="EMBL/GenBank/DDBJ databases">
        <title>Complete sequence of Shewanella amazonensis SB2B.</title>
        <authorList>
            <consortium name="US DOE Joint Genome Institute"/>
            <person name="Copeland A."/>
            <person name="Lucas S."/>
            <person name="Lapidus A."/>
            <person name="Barry K."/>
            <person name="Detter J.C."/>
            <person name="Glavina del Rio T."/>
            <person name="Hammon N."/>
            <person name="Israni S."/>
            <person name="Dalin E."/>
            <person name="Tice H."/>
            <person name="Pitluck S."/>
            <person name="Munk A.C."/>
            <person name="Brettin T."/>
            <person name="Bruce D."/>
            <person name="Han C."/>
            <person name="Tapia R."/>
            <person name="Gilna P."/>
            <person name="Schmutz J."/>
            <person name="Larimer F."/>
            <person name="Land M."/>
            <person name="Hauser L."/>
            <person name="Kyrpides N."/>
            <person name="Mikhailova N."/>
            <person name="Fredrickson J."/>
            <person name="Richardson P."/>
        </authorList>
    </citation>
    <scope>NUCLEOTIDE SEQUENCE [LARGE SCALE GENOMIC DNA]</scope>
    <source>
        <strain>ATCC BAA-1098 / SB2B</strain>
    </source>
</reference>
<organism>
    <name type="scientific">Shewanella amazonensis (strain ATCC BAA-1098 / SB2B)</name>
    <dbReference type="NCBI Taxonomy" id="326297"/>
    <lineage>
        <taxon>Bacteria</taxon>
        <taxon>Pseudomonadati</taxon>
        <taxon>Pseudomonadota</taxon>
        <taxon>Gammaproteobacteria</taxon>
        <taxon>Alteromonadales</taxon>
        <taxon>Shewanellaceae</taxon>
        <taxon>Shewanella</taxon>
    </lineage>
</organism>
<evidence type="ECO:0000255" key="1">
    <source>
        <dbReference type="HAMAP-Rule" id="MF_01633"/>
    </source>
</evidence>
<gene>
    <name evidence="1" type="primary">queC</name>
    <name type="ordered locus">Sama_1826</name>
</gene>
<protein>
    <recommendedName>
        <fullName evidence="1">7-cyano-7-deazaguanine synthase</fullName>
        <ecNumber evidence="1">6.3.4.20</ecNumber>
    </recommendedName>
    <alternativeName>
        <fullName evidence="1">7-cyano-7-carbaguanine synthase</fullName>
    </alternativeName>
    <alternativeName>
        <fullName evidence="1">PreQ(0) synthase</fullName>
    </alternativeName>
    <alternativeName>
        <fullName evidence="1">Queuosine biosynthesis protein QueC</fullName>
    </alternativeName>
</protein>